<name>RL14_SHESM</name>
<organism>
    <name type="scientific">Shewanella sp. (strain MR-4)</name>
    <dbReference type="NCBI Taxonomy" id="60480"/>
    <lineage>
        <taxon>Bacteria</taxon>
        <taxon>Pseudomonadati</taxon>
        <taxon>Pseudomonadota</taxon>
        <taxon>Gammaproteobacteria</taxon>
        <taxon>Alteromonadales</taxon>
        <taxon>Shewanellaceae</taxon>
        <taxon>Shewanella</taxon>
    </lineage>
</organism>
<keyword id="KW-0687">Ribonucleoprotein</keyword>
<keyword id="KW-0689">Ribosomal protein</keyword>
<keyword id="KW-0694">RNA-binding</keyword>
<keyword id="KW-0699">rRNA-binding</keyword>
<accession>Q0HNS7</accession>
<proteinExistence type="inferred from homology"/>
<gene>
    <name evidence="1" type="primary">rplN</name>
    <name type="ordered locus">Shewmr4_0209</name>
</gene>
<reference key="1">
    <citation type="submission" date="2006-08" db="EMBL/GenBank/DDBJ databases">
        <title>Complete sequence of Shewanella sp. MR-4.</title>
        <authorList>
            <consortium name="US DOE Joint Genome Institute"/>
            <person name="Copeland A."/>
            <person name="Lucas S."/>
            <person name="Lapidus A."/>
            <person name="Barry K."/>
            <person name="Detter J.C."/>
            <person name="Glavina del Rio T."/>
            <person name="Hammon N."/>
            <person name="Israni S."/>
            <person name="Dalin E."/>
            <person name="Tice H."/>
            <person name="Pitluck S."/>
            <person name="Kiss H."/>
            <person name="Brettin T."/>
            <person name="Bruce D."/>
            <person name="Han C."/>
            <person name="Tapia R."/>
            <person name="Gilna P."/>
            <person name="Schmutz J."/>
            <person name="Larimer F."/>
            <person name="Land M."/>
            <person name="Hauser L."/>
            <person name="Kyrpides N."/>
            <person name="Mikhailova N."/>
            <person name="Nealson K."/>
            <person name="Konstantinidis K."/>
            <person name="Klappenbach J."/>
            <person name="Tiedje J."/>
            <person name="Richardson P."/>
        </authorList>
    </citation>
    <scope>NUCLEOTIDE SEQUENCE [LARGE SCALE GENOMIC DNA]</scope>
    <source>
        <strain>MR-4</strain>
    </source>
</reference>
<evidence type="ECO:0000255" key="1">
    <source>
        <dbReference type="HAMAP-Rule" id="MF_01367"/>
    </source>
</evidence>
<evidence type="ECO:0000305" key="2"/>
<dbReference type="EMBL" id="CP000446">
    <property type="protein sequence ID" value="ABI37290.1"/>
    <property type="molecule type" value="Genomic_DNA"/>
</dbReference>
<dbReference type="RefSeq" id="WP_006083590.1">
    <property type="nucleotide sequence ID" value="NC_008321.1"/>
</dbReference>
<dbReference type="SMR" id="Q0HNS7"/>
<dbReference type="GeneID" id="75190608"/>
<dbReference type="KEGG" id="she:Shewmr4_0209"/>
<dbReference type="HOGENOM" id="CLU_095071_2_1_6"/>
<dbReference type="GO" id="GO:0022625">
    <property type="term" value="C:cytosolic large ribosomal subunit"/>
    <property type="evidence" value="ECO:0007669"/>
    <property type="project" value="TreeGrafter"/>
</dbReference>
<dbReference type="GO" id="GO:0070180">
    <property type="term" value="F:large ribosomal subunit rRNA binding"/>
    <property type="evidence" value="ECO:0007669"/>
    <property type="project" value="TreeGrafter"/>
</dbReference>
<dbReference type="GO" id="GO:0003735">
    <property type="term" value="F:structural constituent of ribosome"/>
    <property type="evidence" value="ECO:0007669"/>
    <property type="project" value="InterPro"/>
</dbReference>
<dbReference type="GO" id="GO:0006412">
    <property type="term" value="P:translation"/>
    <property type="evidence" value="ECO:0007669"/>
    <property type="project" value="UniProtKB-UniRule"/>
</dbReference>
<dbReference type="CDD" id="cd00337">
    <property type="entry name" value="Ribosomal_uL14"/>
    <property type="match status" value="1"/>
</dbReference>
<dbReference type="FunFam" id="2.40.150.20:FF:000001">
    <property type="entry name" value="50S ribosomal protein L14"/>
    <property type="match status" value="1"/>
</dbReference>
<dbReference type="Gene3D" id="2.40.150.20">
    <property type="entry name" value="Ribosomal protein L14"/>
    <property type="match status" value="1"/>
</dbReference>
<dbReference type="HAMAP" id="MF_01367">
    <property type="entry name" value="Ribosomal_uL14"/>
    <property type="match status" value="1"/>
</dbReference>
<dbReference type="InterPro" id="IPR000218">
    <property type="entry name" value="Ribosomal_uL14"/>
</dbReference>
<dbReference type="InterPro" id="IPR005745">
    <property type="entry name" value="Ribosomal_uL14_bac-type"/>
</dbReference>
<dbReference type="InterPro" id="IPR019972">
    <property type="entry name" value="Ribosomal_uL14_CS"/>
</dbReference>
<dbReference type="InterPro" id="IPR036853">
    <property type="entry name" value="Ribosomal_uL14_sf"/>
</dbReference>
<dbReference type="NCBIfam" id="TIGR01067">
    <property type="entry name" value="rplN_bact"/>
    <property type="match status" value="1"/>
</dbReference>
<dbReference type="PANTHER" id="PTHR11761">
    <property type="entry name" value="50S/60S RIBOSOMAL PROTEIN L14/L23"/>
    <property type="match status" value="1"/>
</dbReference>
<dbReference type="PANTHER" id="PTHR11761:SF3">
    <property type="entry name" value="LARGE RIBOSOMAL SUBUNIT PROTEIN UL14M"/>
    <property type="match status" value="1"/>
</dbReference>
<dbReference type="Pfam" id="PF00238">
    <property type="entry name" value="Ribosomal_L14"/>
    <property type="match status" value="1"/>
</dbReference>
<dbReference type="SMART" id="SM01374">
    <property type="entry name" value="Ribosomal_L14"/>
    <property type="match status" value="1"/>
</dbReference>
<dbReference type="SUPFAM" id="SSF50193">
    <property type="entry name" value="Ribosomal protein L14"/>
    <property type="match status" value="1"/>
</dbReference>
<dbReference type="PROSITE" id="PS00049">
    <property type="entry name" value="RIBOSOMAL_L14"/>
    <property type="match status" value="1"/>
</dbReference>
<protein>
    <recommendedName>
        <fullName evidence="1">Large ribosomal subunit protein uL14</fullName>
    </recommendedName>
    <alternativeName>
        <fullName evidence="2">50S ribosomal protein L14</fullName>
    </alternativeName>
</protein>
<feature type="chain" id="PRO_0000266558" description="Large ribosomal subunit protein uL14">
    <location>
        <begin position="1"/>
        <end position="122"/>
    </location>
</feature>
<sequence length="122" mass="13456">MIQMQSTLDVACNSGARRVQCIKVLGGSHRRYAGIGDIIKVSVKEAIPRAKAKKGDVYNAVVVRTKKGVRRPDGSVIRFDRNAAVLLNNNLQPIGTRIFGPVTRELRNEQFMKIVSLAPEVL</sequence>
<comment type="function">
    <text evidence="1">Binds to 23S rRNA. Forms part of two intersubunit bridges in the 70S ribosome.</text>
</comment>
<comment type="subunit">
    <text evidence="1">Part of the 50S ribosomal subunit. Forms a cluster with proteins L3 and L19. In the 70S ribosome, L14 and L19 interact and together make contacts with the 16S rRNA in bridges B5 and B8.</text>
</comment>
<comment type="similarity">
    <text evidence="1">Belongs to the universal ribosomal protein uL14 family.</text>
</comment>